<proteinExistence type="inferred from homology"/>
<protein>
    <recommendedName>
        <fullName evidence="1">Putative membrane protein insertion efficiency factor</fullName>
    </recommendedName>
</protein>
<evidence type="ECO:0000255" key="1">
    <source>
        <dbReference type="HAMAP-Rule" id="MF_00386"/>
    </source>
</evidence>
<gene>
    <name type="ordered locus">ABC2506</name>
</gene>
<keyword id="KW-1003">Cell membrane</keyword>
<keyword id="KW-0472">Membrane</keyword>
<keyword id="KW-1185">Reference proteome</keyword>
<accession>Q5WF19</accession>
<feature type="chain" id="PRO_0000253074" description="Putative membrane protein insertion efficiency factor">
    <location>
        <begin position="1"/>
        <end position="80"/>
    </location>
</feature>
<organism>
    <name type="scientific">Shouchella clausii (strain KSM-K16)</name>
    <name type="common">Alkalihalobacillus clausii</name>
    <dbReference type="NCBI Taxonomy" id="66692"/>
    <lineage>
        <taxon>Bacteria</taxon>
        <taxon>Bacillati</taxon>
        <taxon>Bacillota</taxon>
        <taxon>Bacilli</taxon>
        <taxon>Bacillales</taxon>
        <taxon>Bacillaceae</taxon>
        <taxon>Shouchella</taxon>
    </lineage>
</organism>
<name>YIDD_SHOC1</name>
<reference key="1">
    <citation type="submission" date="2003-10" db="EMBL/GenBank/DDBJ databases">
        <title>The complete genome sequence of the alkaliphilic Bacillus clausii KSM-K16.</title>
        <authorList>
            <person name="Takaki Y."/>
            <person name="Kageyama Y."/>
            <person name="Shimamura S."/>
            <person name="Suzuki H."/>
            <person name="Nishi S."/>
            <person name="Hatada Y."/>
            <person name="Kawai S."/>
            <person name="Ito S."/>
            <person name="Horikoshi K."/>
        </authorList>
    </citation>
    <scope>NUCLEOTIDE SEQUENCE [LARGE SCALE GENOMIC DNA]</scope>
    <source>
        <strain>KSM-K16</strain>
    </source>
</reference>
<sequence length="80" mass="9100">MRKLLIQIIRLYQRFISPLTPPSCRFYPTCSAYGIEAIETHGAIKGSYLAIKRILKCHPFHPGGVDPVPECQHTKHKKTP</sequence>
<dbReference type="EMBL" id="AP006627">
    <property type="protein sequence ID" value="BAD65041.1"/>
    <property type="molecule type" value="Genomic_DNA"/>
</dbReference>
<dbReference type="STRING" id="66692.ABC2506"/>
<dbReference type="KEGG" id="bcl:ABC2506"/>
<dbReference type="eggNOG" id="COG0759">
    <property type="taxonomic scope" value="Bacteria"/>
</dbReference>
<dbReference type="HOGENOM" id="CLU_144811_6_0_9"/>
<dbReference type="OrthoDB" id="9801753at2"/>
<dbReference type="Proteomes" id="UP000001168">
    <property type="component" value="Chromosome"/>
</dbReference>
<dbReference type="GO" id="GO:0005886">
    <property type="term" value="C:plasma membrane"/>
    <property type="evidence" value="ECO:0007669"/>
    <property type="project" value="UniProtKB-SubCell"/>
</dbReference>
<dbReference type="HAMAP" id="MF_00386">
    <property type="entry name" value="UPF0161_YidD"/>
    <property type="match status" value="1"/>
</dbReference>
<dbReference type="InterPro" id="IPR002696">
    <property type="entry name" value="Membr_insert_effic_factor_YidD"/>
</dbReference>
<dbReference type="NCBIfam" id="TIGR00278">
    <property type="entry name" value="membrane protein insertion efficiency factor YidD"/>
    <property type="match status" value="1"/>
</dbReference>
<dbReference type="PANTHER" id="PTHR33383">
    <property type="entry name" value="MEMBRANE PROTEIN INSERTION EFFICIENCY FACTOR-RELATED"/>
    <property type="match status" value="1"/>
</dbReference>
<dbReference type="PANTHER" id="PTHR33383:SF1">
    <property type="entry name" value="MEMBRANE PROTEIN INSERTION EFFICIENCY FACTOR-RELATED"/>
    <property type="match status" value="1"/>
</dbReference>
<dbReference type="Pfam" id="PF01809">
    <property type="entry name" value="YidD"/>
    <property type="match status" value="1"/>
</dbReference>
<dbReference type="SMART" id="SM01234">
    <property type="entry name" value="Haemolytic"/>
    <property type="match status" value="1"/>
</dbReference>
<comment type="function">
    <text evidence="1">Could be involved in insertion of integral membrane proteins into the membrane.</text>
</comment>
<comment type="subcellular location">
    <subcellularLocation>
        <location evidence="1">Cell membrane</location>
        <topology evidence="1">Peripheral membrane protein</topology>
        <orientation evidence="1">Cytoplasmic side</orientation>
    </subcellularLocation>
</comment>
<comment type="similarity">
    <text evidence="1">Belongs to the UPF0161 family.</text>
</comment>